<sequence length="345" mass="35402">MSAATDIRPLIGLAATRPLTGTEAEAAFGALFEGAATPAQIGGLLMAMRVRGETVEEMAAATRAMRARMNRIKAPEGAMDIVGTGGDGKGTLNISTATAFVVAGAGVPVAKHGNRNLSSKSGSADALTHLGLNVMSTPEIAEAALAATGICFMMAPVHHPAMRHVGPARAELGTRTIFNLLGPMTNPGLVKRQLTGTFDRVWNRPMAETLRELGSECAWLVHGGDGTDEISIAEPTWVAQLKDGEITEFQISPEDAGLPVHPFEAILGGDPARNAAALRALLDGAQGAYRDAVVLNAAAALLIAGQAADLREGAEIARTSIDSGKARAKLAALAAQVGAPADPNG</sequence>
<reference key="1">
    <citation type="submission" date="2006-12" db="EMBL/GenBank/DDBJ databases">
        <title>Complete sequence of chromosome 1 of Paracoccus denitrificans PD1222.</title>
        <authorList>
            <person name="Copeland A."/>
            <person name="Lucas S."/>
            <person name="Lapidus A."/>
            <person name="Barry K."/>
            <person name="Detter J.C."/>
            <person name="Glavina del Rio T."/>
            <person name="Hammon N."/>
            <person name="Israni S."/>
            <person name="Dalin E."/>
            <person name="Tice H."/>
            <person name="Pitluck S."/>
            <person name="Munk A.C."/>
            <person name="Brettin T."/>
            <person name="Bruce D."/>
            <person name="Han C."/>
            <person name="Tapia R."/>
            <person name="Gilna P."/>
            <person name="Schmutz J."/>
            <person name="Larimer F."/>
            <person name="Land M."/>
            <person name="Hauser L."/>
            <person name="Kyrpides N."/>
            <person name="Lykidis A."/>
            <person name="Spiro S."/>
            <person name="Richardson D.J."/>
            <person name="Moir J.W.B."/>
            <person name="Ferguson S.J."/>
            <person name="van Spanning R.J.M."/>
            <person name="Richardson P."/>
        </authorList>
    </citation>
    <scope>NUCLEOTIDE SEQUENCE [LARGE SCALE GENOMIC DNA]</scope>
    <source>
        <strain>Pd 1222</strain>
    </source>
</reference>
<feature type="chain" id="PRO_0000325446" description="Anthranilate phosphoribosyltransferase">
    <location>
        <begin position="1"/>
        <end position="345"/>
    </location>
</feature>
<feature type="binding site" evidence="1">
    <location>
        <position position="83"/>
    </location>
    <ligand>
        <name>5-phospho-alpha-D-ribose 1-diphosphate</name>
        <dbReference type="ChEBI" id="CHEBI:58017"/>
    </ligand>
</feature>
<feature type="binding site" evidence="1">
    <location>
        <position position="83"/>
    </location>
    <ligand>
        <name>anthranilate</name>
        <dbReference type="ChEBI" id="CHEBI:16567"/>
        <label>1</label>
    </ligand>
</feature>
<feature type="binding site" evidence="1">
    <location>
        <begin position="86"/>
        <end position="87"/>
    </location>
    <ligand>
        <name>5-phospho-alpha-D-ribose 1-diphosphate</name>
        <dbReference type="ChEBI" id="CHEBI:58017"/>
    </ligand>
</feature>
<feature type="binding site" evidence="1">
    <location>
        <position position="91"/>
    </location>
    <ligand>
        <name>5-phospho-alpha-D-ribose 1-diphosphate</name>
        <dbReference type="ChEBI" id="CHEBI:58017"/>
    </ligand>
</feature>
<feature type="binding site" evidence="1">
    <location>
        <begin position="93"/>
        <end position="96"/>
    </location>
    <ligand>
        <name>5-phospho-alpha-D-ribose 1-diphosphate</name>
        <dbReference type="ChEBI" id="CHEBI:58017"/>
    </ligand>
</feature>
<feature type="binding site" evidence="1">
    <location>
        <position position="95"/>
    </location>
    <ligand>
        <name>Mg(2+)</name>
        <dbReference type="ChEBI" id="CHEBI:18420"/>
        <label>1</label>
    </ligand>
</feature>
<feature type="binding site" evidence="1">
    <location>
        <begin position="111"/>
        <end position="119"/>
    </location>
    <ligand>
        <name>5-phospho-alpha-D-ribose 1-diphosphate</name>
        <dbReference type="ChEBI" id="CHEBI:58017"/>
    </ligand>
</feature>
<feature type="binding site" evidence="1">
    <location>
        <position position="114"/>
    </location>
    <ligand>
        <name>anthranilate</name>
        <dbReference type="ChEBI" id="CHEBI:16567"/>
        <label>1</label>
    </ligand>
</feature>
<feature type="binding site" evidence="1">
    <location>
        <position position="123"/>
    </location>
    <ligand>
        <name>5-phospho-alpha-D-ribose 1-diphosphate</name>
        <dbReference type="ChEBI" id="CHEBI:58017"/>
    </ligand>
</feature>
<feature type="binding site" evidence="1">
    <location>
        <position position="169"/>
    </location>
    <ligand>
        <name>anthranilate</name>
        <dbReference type="ChEBI" id="CHEBI:16567"/>
        <label>2</label>
    </ligand>
</feature>
<feature type="binding site" evidence="1">
    <location>
        <position position="228"/>
    </location>
    <ligand>
        <name>Mg(2+)</name>
        <dbReference type="ChEBI" id="CHEBI:18420"/>
        <label>2</label>
    </ligand>
</feature>
<feature type="binding site" evidence="1">
    <location>
        <position position="229"/>
    </location>
    <ligand>
        <name>Mg(2+)</name>
        <dbReference type="ChEBI" id="CHEBI:18420"/>
        <label>1</label>
    </ligand>
</feature>
<feature type="binding site" evidence="1">
    <location>
        <position position="229"/>
    </location>
    <ligand>
        <name>Mg(2+)</name>
        <dbReference type="ChEBI" id="CHEBI:18420"/>
        <label>2</label>
    </ligand>
</feature>
<keyword id="KW-0028">Amino-acid biosynthesis</keyword>
<keyword id="KW-0057">Aromatic amino acid biosynthesis</keyword>
<keyword id="KW-0328">Glycosyltransferase</keyword>
<keyword id="KW-0460">Magnesium</keyword>
<keyword id="KW-0479">Metal-binding</keyword>
<keyword id="KW-1185">Reference proteome</keyword>
<keyword id="KW-0808">Transferase</keyword>
<keyword id="KW-0822">Tryptophan biosynthesis</keyword>
<organism>
    <name type="scientific">Paracoccus denitrificans (strain Pd 1222)</name>
    <dbReference type="NCBI Taxonomy" id="318586"/>
    <lineage>
        <taxon>Bacteria</taxon>
        <taxon>Pseudomonadati</taxon>
        <taxon>Pseudomonadota</taxon>
        <taxon>Alphaproteobacteria</taxon>
        <taxon>Rhodobacterales</taxon>
        <taxon>Paracoccaceae</taxon>
        <taxon>Paracoccus</taxon>
    </lineage>
</organism>
<proteinExistence type="inferred from homology"/>
<protein>
    <recommendedName>
        <fullName evidence="1">Anthranilate phosphoribosyltransferase</fullName>
        <ecNumber evidence="1">2.4.2.18</ecNumber>
    </recommendedName>
</protein>
<name>TRPD_PARDP</name>
<comment type="function">
    <text evidence="1">Catalyzes the transfer of the phosphoribosyl group of 5-phosphorylribose-1-pyrophosphate (PRPP) to anthranilate to yield N-(5'-phosphoribosyl)-anthranilate (PRA).</text>
</comment>
<comment type="catalytic activity">
    <reaction evidence="1">
        <text>N-(5-phospho-beta-D-ribosyl)anthranilate + diphosphate = 5-phospho-alpha-D-ribose 1-diphosphate + anthranilate</text>
        <dbReference type="Rhea" id="RHEA:11768"/>
        <dbReference type="ChEBI" id="CHEBI:16567"/>
        <dbReference type="ChEBI" id="CHEBI:18277"/>
        <dbReference type="ChEBI" id="CHEBI:33019"/>
        <dbReference type="ChEBI" id="CHEBI:58017"/>
        <dbReference type="EC" id="2.4.2.18"/>
    </reaction>
</comment>
<comment type="cofactor">
    <cofactor evidence="1">
        <name>Mg(2+)</name>
        <dbReference type="ChEBI" id="CHEBI:18420"/>
    </cofactor>
    <text evidence="1">Binds 2 magnesium ions per monomer.</text>
</comment>
<comment type="pathway">
    <text evidence="1">Amino-acid biosynthesis; L-tryptophan biosynthesis; L-tryptophan from chorismate: step 2/5.</text>
</comment>
<comment type="subunit">
    <text evidence="1">Homodimer.</text>
</comment>
<comment type="similarity">
    <text evidence="1">Belongs to the anthranilate phosphoribosyltransferase family.</text>
</comment>
<dbReference type="EC" id="2.4.2.18" evidence="1"/>
<dbReference type="EMBL" id="CP000489">
    <property type="protein sequence ID" value="ABL70229.1"/>
    <property type="molecule type" value="Genomic_DNA"/>
</dbReference>
<dbReference type="RefSeq" id="WP_011748424.1">
    <property type="nucleotide sequence ID" value="NC_008686.1"/>
</dbReference>
<dbReference type="SMR" id="A1B3Y5"/>
<dbReference type="STRING" id="318586.Pden_2137"/>
<dbReference type="EnsemblBacteria" id="ABL70229">
    <property type="protein sequence ID" value="ABL70229"/>
    <property type="gene ID" value="Pden_2137"/>
</dbReference>
<dbReference type="GeneID" id="93450534"/>
<dbReference type="KEGG" id="pde:Pden_2137"/>
<dbReference type="eggNOG" id="COG0547">
    <property type="taxonomic scope" value="Bacteria"/>
</dbReference>
<dbReference type="HOGENOM" id="CLU_034315_2_1_5"/>
<dbReference type="OrthoDB" id="9806430at2"/>
<dbReference type="UniPathway" id="UPA00035">
    <property type="reaction ID" value="UER00041"/>
</dbReference>
<dbReference type="Proteomes" id="UP000000361">
    <property type="component" value="Chromosome 1"/>
</dbReference>
<dbReference type="GO" id="GO:0005829">
    <property type="term" value="C:cytosol"/>
    <property type="evidence" value="ECO:0007669"/>
    <property type="project" value="TreeGrafter"/>
</dbReference>
<dbReference type="GO" id="GO:0004048">
    <property type="term" value="F:anthranilate phosphoribosyltransferase activity"/>
    <property type="evidence" value="ECO:0007669"/>
    <property type="project" value="UniProtKB-UniRule"/>
</dbReference>
<dbReference type="GO" id="GO:0000287">
    <property type="term" value="F:magnesium ion binding"/>
    <property type="evidence" value="ECO:0007669"/>
    <property type="project" value="UniProtKB-UniRule"/>
</dbReference>
<dbReference type="GO" id="GO:0000162">
    <property type="term" value="P:L-tryptophan biosynthetic process"/>
    <property type="evidence" value="ECO:0007669"/>
    <property type="project" value="UniProtKB-UniRule"/>
</dbReference>
<dbReference type="FunFam" id="3.40.1030.10:FF:000002">
    <property type="entry name" value="Anthranilate phosphoribosyltransferase"/>
    <property type="match status" value="1"/>
</dbReference>
<dbReference type="Gene3D" id="3.40.1030.10">
    <property type="entry name" value="Nucleoside phosphorylase/phosphoribosyltransferase catalytic domain"/>
    <property type="match status" value="1"/>
</dbReference>
<dbReference type="Gene3D" id="1.20.970.10">
    <property type="entry name" value="Transferase, Pyrimidine Nucleoside Phosphorylase, Chain C"/>
    <property type="match status" value="1"/>
</dbReference>
<dbReference type="HAMAP" id="MF_00211">
    <property type="entry name" value="TrpD"/>
    <property type="match status" value="1"/>
</dbReference>
<dbReference type="InterPro" id="IPR005940">
    <property type="entry name" value="Anthranilate_Pribosyl_Tfrase"/>
</dbReference>
<dbReference type="InterPro" id="IPR000312">
    <property type="entry name" value="Glycosyl_Trfase_fam3"/>
</dbReference>
<dbReference type="InterPro" id="IPR017459">
    <property type="entry name" value="Glycosyl_Trfase_fam3_N_dom"/>
</dbReference>
<dbReference type="InterPro" id="IPR036320">
    <property type="entry name" value="Glycosyl_Trfase_fam3_N_dom_sf"/>
</dbReference>
<dbReference type="InterPro" id="IPR035902">
    <property type="entry name" value="Nuc_phospho_transferase"/>
</dbReference>
<dbReference type="NCBIfam" id="TIGR01245">
    <property type="entry name" value="trpD"/>
    <property type="match status" value="1"/>
</dbReference>
<dbReference type="PANTHER" id="PTHR43285">
    <property type="entry name" value="ANTHRANILATE PHOSPHORIBOSYLTRANSFERASE"/>
    <property type="match status" value="1"/>
</dbReference>
<dbReference type="PANTHER" id="PTHR43285:SF2">
    <property type="entry name" value="ANTHRANILATE PHOSPHORIBOSYLTRANSFERASE"/>
    <property type="match status" value="1"/>
</dbReference>
<dbReference type="Pfam" id="PF02885">
    <property type="entry name" value="Glycos_trans_3N"/>
    <property type="match status" value="1"/>
</dbReference>
<dbReference type="Pfam" id="PF00591">
    <property type="entry name" value="Glycos_transf_3"/>
    <property type="match status" value="1"/>
</dbReference>
<dbReference type="SUPFAM" id="SSF52418">
    <property type="entry name" value="Nucleoside phosphorylase/phosphoribosyltransferase catalytic domain"/>
    <property type="match status" value="1"/>
</dbReference>
<dbReference type="SUPFAM" id="SSF47648">
    <property type="entry name" value="Nucleoside phosphorylase/phosphoribosyltransferase N-terminal domain"/>
    <property type="match status" value="1"/>
</dbReference>
<gene>
    <name evidence="1" type="primary">trpD</name>
    <name type="ordered locus">Pden_2137</name>
</gene>
<evidence type="ECO:0000255" key="1">
    <source>
        <dbReference type="HAMAP-Rule" id="MF_00211"/>
    </source>
</evidence>
<accession>A1B3Y5</accession>